<feature type="chain" id="PRO_1000070647" description="Urease subunit alpha">
    <location>
        <begin position="1"/>
        <end position="576"/>
    </location>
</feature>
<feature type="domain" description="Urease" evidence="1">
    <location>
        <begin position="132"/>
        <end position="576"/>
    </location>
</feature>
<feature type="active site" description="Proton donor" evidence="1">
    <location>
        <position position="323"/>
    </location>
</feature>
<feature type="binding site" evidence="1">
    <location>
        <position position="137"/>
    </location>
    <ligand>
        <name>Ni(2+)</name>
        <dbReference type="ChEBI" id="CHEBI:49786"/>
        <label>1</label>
    </ligand>
</feature>
<feature type="binding site" evidence="1">
    <location>
        <position position="139"/>
    </location>
    <ligand>
        <name>Ni(2+)</name>
        <dbReference type="ChEBI" id="CHEBI:49786"/>
        <label>1</label>
    </ligand>
</feature>
<feature type="binding site" description="via carbamate group" evidence="1">
    <location>
        <position position="220"/>
    </location>
    <ligand>
        <name>Ni(2+)</name>
        <dbReference type="ChEBI" id="CHEBI:49786"/>
        <label>1</label>
    </ligand>
</feature>
<feature type="binding site" description="via carbamate group" evidence="1">
    <location>
        <position position="220"/>
    </location>
    <ligand>
        <name>Ni(2+)</name>
        <dbReference type="ChEBI" id="CHEBI:49786"/>
        <label>2</label>
    </ligand>
</feature>
<feature type="binding site" evidence="1">
    <location>
        <position position="222"/>
    </location>
    <ligand>
        <name>substrate</name>
    </ligand>
</feature>
<feature type="binding site" evidence="1">
    <location>
        <position position="249"/>
    </location>
    <ligand>
        <name>Ni(2+)</name>
        <dbReference type="ChEBI" id="CHEBI:49786"/>
        <label>2</label>
    </ligand>
</feature>
<feature type="binding site" evidence="1">
    <location>
        <position position="275"/>
    </location>
    <ligand>
        <name>Ni(2+)</name>
        <dbReference type="ChEBI" id="CHEBI:49786"/>
        <label>2</label>
    </ligand>
</feature>
<feature type="binding site" evidence="1">
    <location>
        <position position="363"/>
    </location>
    <ligand>
        <name>Ni(2+)</name>
        <dbReference type="ChEBI" id="CHEBI:49786"/>
        <label>1</label>
    </ligand>
</feature>
<feature type="modified residue" description="N6-carboxylysine" evidence="1">
    <location>
        <position position="220"/>
    </location>
</feature>
<evidence type="ECO:0000255" key="1">
    <source>
        <dbReference type="HAMAP-Rule" id="MF_01953"/>
    </source>
</evidence>
<dbReference type="EC" id="3.5.1.5" evidence="1"/>
<dbReference type="EMBL" id="CP000454">
    <property type="protein sequence ID" value="ABK01644.1"/>
    <property type="molecule type" value="Genomic_DNA"/>
</dbReference>
<dbReference type="RefSeq" id="WP_011690114.1">
    <property type="nucleotide sequence ID" value="NC_008541.1"/>
</dbReference>
<dbReference type="SMR" id="A0JRH4"/>
<dbReference type="STRING" id="290399.Arth_0243"/>
<dbReference type="KEGG" id="art:Arth_0243"/>
<dbReference type="eggNOG" id="COG0804">
    <property type="taxonomic scope" value="Bacteria"/>
</dbReference>
<dbReference type="HOGENOM" id="CLU_000980_0_0_11"/>
<dbReference type="OrthoDB" id="9802793at2"/>
<dbReference type="UniPathway" id="UPA00258">
    <property type="reaction ID" value="UER00370"/>
</dbReference>
<dbReference type="Proteomes" id="UP000000754">
    <property type="component" value="Chromosome"/>
</dbReference>
<dbReference type="GO" id="GO:0005737">
    <property type="term" value="C:cytoplasm"/>
    <property type="evidence" value="ECO:0007669"/>
    <property type="project" value="UniProtKB-SubCell"/>
</dbReference>
<dbReference type="GO" id="GO:0016151">
    <property type="term" value="F:nickel cation binding"/>
    <property type="evidence" value="ECO:0007669"/>
    <property type="project" value="UniProtKB-UniRule"/>
</dbReference>
<dbReference type="GO" id="GO:0009039">
    <property type="term" value="F:urease activity"/>
    <property type="evidence" value="ECO:0007669"/>
    <property type="project" value="UniProtKB-UniRule"/>
</dbReference>
<dbReference type="GO" id="GO:0043419">
    <property type="term" value="P:urea catabolic process"/>
    <property type="evidence" value="ECO:0007669"/>
    <property type="project" value="UniProtKB-UniRule"/>
</dbReference>
<dbReference type="CDD" id="cd00375">
    <property type="entry name" value="Urease_alpha"/>
    <property type="match status" value="1"/>
</dbReference>
<dbReference type="Gene3D" id="3.20.20.140">
    <property type="entry name" value="Metal-dependent hydrolases"/>
    <property type="match status" value="1"/>
</dbReference>
<dbReference type="Gene3D" id="2.30.40.10">
    <property type="entry name" value="Urease, subunit C, domain 1"/>
    <property type="match status" value="1"/>
</dbReference>
<dbReference type="HAMAP" id="MF_01953">
    <property type="entry name" value="Urease_alpha"/>
    <property type="match status" value="1"/>
</dbReference>
<dbReference type="InterPro" id="IPR006680">
    <property type="entry name" value="Amidohydro-rel"/>
</dbReference>
<dbReference type="InterPro" id="IPR011059">
    <property type="entry name" value="Metal-dep_hydrolase_composite"/>
</dbReference>
<dbReference type="InterPro" id="IPR032466">
    <property type="entry name" value="Metal_Hydrolase"/>
</dbReference>
<dbReference type="InterPro" id="IPR011612">
    <property type="entry name" value="Urease_alpha_N_dom"/>
</dbReference>
<dbReference type="InterPro" id="IPR050112">
    <property type="entry name" value="Urease_alpha_subunit"/>
</dbReference>
<dbReference type="InterPro" id="IPR017950">
    <property type="entry name" value="Urease_AS"/>
</dbReference>
<dbReference type="InterPro" id="IPR005848">
    <property type="entry name" value="Urease_asu"/>
</dbReference>
<dbReference type="InterPro" id="IPR017951">
    <property type="entry name" value="Urease_asu_c"/>
</dbReference>
<dbReference type="InterPro" id="IPR029754">
    <property type="entry name" value="Urease_Ni-bd"/>
</dbReference>
<dbReference type="NCBIfam" id="NF009685">
    <property type="entry name" value="PRK13206.1"/>
    <property type="match status" value="1"/>
</dbReference>
<dbReference type="NCBIfam" id="NF009686">
    <property type="entry name" value="PRK13207.1"/>
    <property type="match status" value="1"/>
</dbReference>
<dbReference type="NCBIfam" id="TIGR01792">
    <property type="entry name" value="urease_alph"/>
    <property type="match status" value="1"/>
</dbReference>
<dbReference type="PANTHER" id="PTHR43440">
    <property type="entry name" value="UREASE"/>
    <property type="match status" value="1"/>
</dbReference>
<dbReference type="PANTHER" id="PTHR43440:SF1">
    <property type="entry name" value="UREASE"/>
    <property type="match status" value="1"/>
</dbReference>
<dbReference type="Pfam" id="PF01979">
    <property type="entry name" value="Amidohydro_1"/>
    <property type="match status" value="1"/>
</dbReference>
<dbReference type="Pfam" id="PF00449">
    <property type="entry name" value="Urease_alpha"/>
    <property type="match status" value="1"/>
</dbReference>
<dbReference type="PRINTS" id="PR01752">
    <property type="entry name" value="UREASE"/>
</dbReference>
<dbReference type="SUPFAM" id="SSF51338">
    <property type="entry name" value="Composite domain of metallo-dependent hydrolases"/>
    <property type="match status" value="2"/>
</dbReference>
<dbReference type="SUPFAM" id="SSF51556">
    <property type="entry name" value="Metallo-dependent hydrolases"/>
    <property type="match status" value="1"/>
</dbReference>
<dbReference type="PROSITE" id="PS01120">
    <property type="entry name" value="UREASE_1"/>
    <property type="match status" value="1"/>
</dbReference>
<dbReference type="PROSITE" id="PS00145">
    <property type="entry name" value="UREASE_2"/>
    <property type="match status" value="1"/>
</dbReference>
<dbReference type="PROSITE" id="PS51368">
    <property type="entry name" value="UREASE_3"/>
    <property type="match status" value="1"/>
</dbReference>
<sequence length="576" mass="61668">MSFELTRRQYADLYGPTTGDSIRLADTELFLEIEKDLTVYGEEVVFGGGKVIRDGMGQNGQVTRDEDVPDTVITNAVILDYTGIYKADVAIRDGHIIKIGKAGNPQITDGVDIVIGASTEIIAGERKILTAGGVDTHIHFISPDQVPTALTSGVTTMVGGGTGPAEGTKATTVTPGKWHIQRMLQATEGMPINIGLFGKGHASAVEPLAEQIRAGAIGLKVHEDWGSTTSSIDNSLKVADEYDVQVAIHTDTLNECGFVEDTIRAIGGRVIHTFHTEGAGGGHAPDIIKIAGLPNVLPASTNPTLPYTRNTIEEHLDMLMVCHHLNPDIPEDVAFADSRIRAETIAAEDVLQDLGIFAITSSDSQAMGRVGEVITRTWQVADKMKKQRGVLKDPAGGAHGSEDSDNFRLKRYVAKYTINAAIAQGMADSIGSVEEGKFADLVLWDPAFFGVKPELVLKGGQIAYALMGDANASIPTPQPRTMRPMFAAFGKAVQQSSITFLSQAAIDAGVPEELGLQKVIRAVSGIRSLSKADLKYNDATPDIQVDPETYKVTVDGEDVTCEPADVLPMAQRYFLF</sequence>
<name>URE1_ARTS2</name>
<protein>
    <recommendedName>
        <fullName evidence="1">Urease subunit alpha</fullName>
        <ecNumber evidence="1">3.5.1.5</ecNumber>
    </recommendedName>
    <alternativeName>
        <fullName evidence="1">Urea amidohydrolase subunit alpha</fullName>
    </alternativeName>
</protein>
<keyword id="KW-0963">Cytoplasm</keyword>
<keyword id="KW-0378">Hydrolase</keyword>
<keyword id="KW-0479">Metal-binding</keyword>
<keyword id="KW-0533">Nickel</keyword>
<keyword id="KW-1185">Reference proteome</keyword>
<proteinExistence type="inferred from homology"/>
<comment type="catalytic activity">
    <reaction evidence="1">
        <text>urea + 2 H2O + H(+) = hydrogencarbonate + 2 NH4(+)</text>
        <dbReference type="Rhea" id="RHEA:20557"/>
        <dbReference type="ChEBI" id="CHEBI:15377"/>
        <dbReference type="ChEBI" id="CHEBI:15378"/>
        <dbReference type="ChEBI" id="CHEBI:16199"/>
        <dbReference type="ChEBI" id="CHEBI:17544"/>
        <dbReference type="ChEBI" id="CHEBI:28938"/>
        <dbReference type="EC" id="3.5.1.5"/>
    </reaction>
</comment>
<comment type="cofactor">
    <cofactor evidence="1">
        <name>Ni cation</name>
        <dbReference type="ChEBI" id="CHEBI:25516"/>
    </cofactor>
    <text evidence="1">Binds 2 nickel ions per subunit.</text>
</comment>
<comment type="pathway">
    <text evidence="1">Nitrogen metabolism; urea degradation; CO(2) and NH(3) from urea (urease route): step 1/1.</text>
</comment>
<comment type="subunit">
    <text evidence="1">Heterotrimer of UreA (gamma), UreB (beta) and UreC (alpha) subunits. Three heterotrimers associate to form the active enzyme.</text>
</comment>
<comment type="subcellular location">
    <subcellularLocation>
        <location evidence="1">Cytoplasm</location>
    </subcellularLocation>
</comment>
<comment type="PTM">
    <text evidence="1">Carboxylation allows a single lysine to coordinate two nickel ions.</text>
</comment>
<comment type="similarity">
    <text evidence="1">Belongs to the metallo-dependent hydrolases superfamily. Urease alpha subunit family.</text>
</comment>
<accession>A0JRH4</accession>
<gene>
    <name evidence="1" type="primary">ureC</name>
    <name type="ordered locus">Arth_0243</name>
</gene>
<organism>
    <name type="scientific">Arthrobacter sp. (strain FB24)</name>
    <dbReference type="NCBI Taxonomy" id="290399"/>
    <lineage>
        <taxon>Bacteria</taxon>
        <taxon>Bacillati</taxon>
        <taxon>Actinomycetota</taxon>
        <taxon>Actinomycetes</taxon>
        <taxon>Micrococcales</taxon>
        <taxon>Micrococcaceae</taxon>
        <taxon>Arthrobacter</taxon>
    </lineage>
</organism>
<reference key="1">
    <citation type="journal article" date="2013" name="Stand. Genomic Sci.">
        <title>Complete genome sequence of Arthrobacter sp. strain FB24.</title>
        <authorList>
            <person name="Nakatsu C.H."/>
            <person name="Barabote R."/>
            <person name="Thompson S."/>
            <person name="Bruce D."/>
            <person name="Detter C."/>
            <person name="Brettin T."/>
            <person name="Han C."/>
            <person name="Beasley F."/>
            <person name="Chen W."/>
            <person name="Konopka A."/>
            <person name="Xie G."/>
        </authorList>
    </citation>
    <scope>NUCLEOTIDE SEQUENCE [LARGE SCALE GENOMIC DNA]</scope>
    <source>
        <strain>FB24</strain>
    </source>
</reference>